<dbReference type="EC" id="2.5.1.18"/>
<dbReference type="EMBL" id="FO080386">
    <property type="protein sequence ID" value="CCD63360.1"/>
    <property type="molecule type" value="Genomic_DNA"/>
</dbReference>
<dbReference type="PIR" id="T34201">
    <property type="entry name" value="T34201"/>
</dbReference>
<dbReference type="RefSeq" id="NP_501148.1">
    <property type="nucleotide sequence ID" value="NM_068747.8"/>
</dbReference>
<dbReference type="SMR" id="Q18973"/>
<dbReference type="BioGRID" id="42617">
    <property type="interactions" value="13"/>
</dbReference>
<dbReference type="FunCoup" id="Q18973">
    <property type="interactions" value="347"/>
</dbReference>
<dbReference type="STRING" id="6239.D2024.7.1"/>
<dbReference type="PaxDb" id="6239-D2024.7.1"/>
<dbReference type="PeptideAtlas" id="Q18973"/>
<dbReference type="EnsemblMetazoa" id="D2024.7.1">
    <property type="protein sequence ID" value="D2024.7.1"/>
    <property type="gene ID" value="WBGene00017054"/>
</dbReference>
<dbReference type="GeneID" id="177498"/>
<dbReference type="KEGG" id="cel:CELE_D2024.7"/>
<dbReference type="AGR" id="WB:WBGene00017054"/>
<dbReference type="CTD" id="177498"/>
<dbReference type="WormBase" id="D2024.7">
    <property type="protein sequence ID" value="CE04296"/>
    <property type="gene ID" value="WBGene00017054"/>
    <property type="gene designation" value="gstk-2"/>
</dbReference>
<dbReference type="eggNOG" id="ENOG502R0HS">
    <property type="taxonomic scope" value="Eukaryota"/>
</dbReference>
<dbReference type="GeneTree" id="ENSGT00440000033697"/>
<dbReference type="HOGENOM" id="CLU_069253_1_1_1"/>
<dbReference type="InParanoid" id="Q18973"/>
<dbReference type="OMA" id="PFWGFDR"/>
<dbReference type="OrthoDB" id="4664297at2759"/>
<dbReference type="PhylomeDB" id="Q18973"/>
<dbReference type="Reactome" id="R-CEL-156590">
    <property type="pathway name" value="Glutathione conjugation"/>
</dbReference>
<dbReference type="Reactome" id="R-CEL-9033241">
    <property type="pathway name" value="Peroxisomal protein import"/>
</dbReference>
<dbReference type="PRO" id="PR:Q18973"/>
<dbReference type="Proteomes" id="UP000001940">
    <property type="component" value="Chromosome IV"/>
</dbReference>
<dbReference type="Bgee" id="WBGene00017054">
    <property type="expression patterns" value="Expressed in larva and 4 other cell types or tissues"/>
</dbReference>
<dbReference type="GO" id="GO:0005739">
    <property type="term" value="C:mitochondrion"/>
    <property type="evidence" value="ECO:0000314"/>
    <property type="project" value="WormBase"/>
</dbReference>
<dbReference type="GO" id="GO:0005777">
    <property type="term" value="C:peroxisome"/>
    <property type="evidence" value="ECO:0000318"/>
    <property type="project" value="GO_Central"/>
</dbReference>
<dbReference type="GO" id="GO:0004602">
    <property type="term" value="F:glutathione peroxidase activity"/>
    <property type="evidence" value="ECO:0000318"/>
    <property type="project" value="GO_Central"/>
</dbReference>
<dbReference type="GO" id="GO:0004364">
    <property type="term" value="F:glutathione transferase activity"/>
    <property type="evidence" value="ECO:0000318"/>
    <property type="project" value="GO_Central"/>
</dbReference>
<dbReference type="GO" id="GO:0006749">
    <property type="term" value="P:glutathione metabolic process"/>
    <property type="evidence" value="ECO:0000318"/>
    <property type="project" value="GO_Central"/>
</dbReference>
<dbReference type="CDD" id="cd03021">
    <property type="entry name" value="DsbA_GSTK"/>
    <property type="match status" value="1"/>
</dbReference>
<dbReference type="FunFam" id="3.40.30.10:FF:000325">
    <property type="entry name" value="Glutathione S-transferase kappa"/>
    <property type="match status" value="1"/>
</dbReference>
<dbReference type="Gene3D" id="3.40.30.10">
    <property type="entry name" value="Glutaredoxin"/>
    <property type="match status" value="1"/>
</dbReference>
<dbReference type="InterPro" id="IPR001853">
    <property type="entry name" value="DSBA-like_thioredoxin_dom"/>
</dbReference>
<dbReference type="InterPro" id="IPR051924">
    <property type="entry name" value="GST_Kappa/NadH"/>
</dbReference>
<dbReference type="InterPro" id="IPR044088">
    <property type="entry name" value="GSTK"/>
</dbReference>
<dbReference type="InterPro" id="IPR014440">
    <property type="entry name" value="HCCAis_GSTk"/>
</dbReference>
<dbReference type="InterPro" id="IPR036249">
    <property type="entry name" value="Thioredoxin-like_sf"/>
</dbReference>
<dbReference type="PANTHER" id="PTHR42943">
    <property type="entry name" value="GLUTATHIONE S-TRANSFERASE KAPPA"/>
    <property type="match status" value="1"/>
</dbReference>
<dbReference type="PANTHER" id="PTHR42943:SF2">
    <property type="entry name" value="GLUTATHIONE S-TRANSFERASE KAPPA 1"/>
    <property type="match status" value="1"/>
</dbReference>
<dbReference type="Pfam" id="PF01323">
    <property type="entry name" value="DSBA"/>
    <property type="match status" value="1"/>
</dbReference>
<dbReference type="PIRSF" id="PIRSF006386">
    <property type="entry name" value="HCCAis_GSTk"/>
    <property type="match status" value="1"/>
</dbReference>
<dbReference type="SUPFAM" id="SSF52833">
    <property type="entry name" value="Thioredoxin-like"/>
    <property type="match status" value="1"/>
</dbReference>
<gene>
    <name type="primary">gstk-2</name>
    <name type="ORF">D2024.7</name>
</gene>
<reference key="1">
    <citation type="journal article" date="1998" name="Science">
        <title>Genome sequence of the nematode C. elegans: a platform for investigating biology.</title>
        <authorList>
            <consortium name="The C. elegans sequencing consortium"/>
        </authorList>
    </citation>
    <scope>NUCLEOTIDE SEQUENCE [LARGE SCALE GENOMIC DNA]</scope>
    <source>
        <strain>Bristol N2</strain>
    </source>
</reference>
<reference key="2">
    <citation type="journal article" date="2009" name="FEBS J.">
        <title>Glutathione transferases kappa 1 and kappa 2 localize in peroxisomes and mitochondria, respectively, and are involved in lipid metabolism and respiration in Caenorhabditis elegans.</title>
        <authorList>
            <person name="Petit E."/>
            <person name="Michelet X."/>
            <person name="Rauch C."/>
            <person name="Bertrand-Michel J."/>
            <person name="Terce F."/>
            <person name="Legouis R."/>
            <person name="Morel F."/>
        </authorList>
    </citation>
    <scope>FUNCTION</scope>
    <scope>SUBCELLULAR LOCATION</scope>
    <scope>TISSUE SPECIFICITY</scope>
    <scope>DISRUPTION PHENOTYPE</scope>
</reference>
<accession>Q18973</accession>
<comment type="function">
    <text evidence="2">Has roles in respiratory and lipid metabolism.</text>
</comment>
<comment type="catalytic activity">
    <reaction>
        <text>RX + glutathione = an S-substituted glutathione + a halide anion + H(+)</text>
        <dbReference type="Rhea" id="RHEA:16437"/>
        <dbReference type="ChEBI" id="CHEBI:15378"/>
        <dbReference type="ChEBI" id="CHEBI:16042"/>
        <dbReference type="ChEBI" id="CHEBI:17792"/>
        <dbReference type="ChEBI" id="CHEBI:57925"/>
        <dbReference type="ChEBI" id="CHEBI:90779"/>
        <dbReference type="EC" id="2.5.1.18"/>
    </reaction>
</comment>
<comment type="subcellular location">
    <subcellularLocation>
        <location evidence="2">Mitochondrion</location>
    </subcellularLocation>
</comment>
<comment type="tissue specificity">
    <text evidence="2">Expressed in the pharynx, body wall muscles and epidermis. Weaker expression is seen in the intestine.</text>
</comment>
<comment type="disruption phenotype">
    <text evidence="2">Significant decrease in respiration rate and a lower concentration of the monounsaturated fatty acid cis-vaccenic acid.</text>
</comment>
<comment type="similarity">
    <text evidence="3">Belongs to the GST superfamily. Kappa family.</text>
</comment>
<proteinExistence type="evidence at transcript level"/>
<protein>
    <recommendedName>
        <fullName>Glutathione s-transferase kappa 2</fullName>
        <ecNumber>2.5.1.18</ecNumber>
    </recommendedName>
</protein>
<feature type="chain" id="PRO_0000185894" description="Glutathione s-transferase kappa 2">
    <location>
        <begin position="1"/>
        <end position="225"/>
    </location>
</feature>
<feature type="binding site" evidence="1">
    <location>
        <begin position="15"/>
        <end position="17"/>
    </location>
    <ligand>
        <name>glutathione</name>
        <dbReference type="ChEBI" id="CHEBI:57925"/>
    </ligand>
</feature>
<feature type="binding site" evidence="1">
    <location>
        <position position="52"/>
    </location>
    <ligand>
        <name>glutathione</name>
        <dbReference type="ChEBI" id="CHEBI:57925"/>
    </ligand>
</feature>
<feature type="binding site" evidence="1">
    <location>
        <begin position="200"/>
        <end position="201"/>
    </location>
    <ligand>
        <name>glutathione</name>
        <dbReference type="ChEBI" id="CHEBI:57925"/>
    </ligand>
</feature>
<organism>
    <name type="scientific">Caenorhabditis elegans</name>
    <dbReference type="NCBI Taxonomy" id="6239"/>
    <lineage>
        <taxon>Eukaryota</taxon>
        <taxon>Metazoa</taxon>
        <taxon>Ecdysozoa</taxon>
        <taxon>Nematoda</taxon>
        <taxon>Chromadorea</taxon>
        <taxon>Rhabditida</taxon>
        <taxon>Rhabditina</taxon>
        <taxon>Rhabditomorpha</taxon>
        <taxon>Rhabditoidea</taxon>
        <taxon>Rhabditidae</taxon>
        <taxon>Peloderinae</taxon>
        <taxon>Caenorhabditis</taxon>
    </lineage>
</organism>
<keyword id="KW-0496">Mitochondrion</keyword>
<keyword id="KW-1185">Reference proteome</keyword>
<keyword id="KW-0808">Transferase</keyword>
<evidence type="ECO:0000250" key="1"/>
<evidence type="ECO:0000269" key="2">
    <source>
    </source>
</evidence>
<evidence type="ECO:0000305" key="3"/>
<sequence length="225" mass="25951">MPNRKVVKFFFDVISPYSYFGFEGITRHRSVWKTPIQMKPFFFAGVVRHTENPGLPLRIPIKEKYMHKDLLFSAQYWGIPFRLPKDYTNMMLNTSSIVPQRILVASQLRDNVLMEDVARGLWHRFYAYGKPIFTKSQVAEVLRDLHVKDVDELVMMSDSAEVKNILRENTDEAIGNGCFGAPWMHITDGHGKVLQTVFGSDRLPQVADFLAEPFKGPMREKKPNA</sequence>
<name>GSTK2_CAEEL</name>